<keyword id="KW-0067">ATP-binding</keyword>
<keyword id="KW-0963">Cytoplasm</keyword>
<keyword id="KW-0227">DNA damage</keyword>
<keyword id="KW-0228">DNA excision</keyword>
<keyword id="KW-0234">DNA repair</keyword>
<keyword id="KW-0267">Excision nuclease</keyword>
<keyword id="KW-0547">Nucleotide-binding</keyword>
<keyword id="KW-0742">SOS response</keyword>
<sequence length="663" mass="76017">MIDRKDTNRFKLVSKYSPSGDQPQAIETLVDNIEGGEKAQILKGATGTGKTYTMSQVIAQVNKPTLVIAHNKTLAGQLYGEFKEFFPDNAVEYFVSYYDYYQPEAYVPSSDTYIEKDSSVNDEIDKLRHSATSSLLERNDVIVVASVSCIYGLGSPKEYADSVVSLRPGQEISRDQLLNNLVDIQFERNDIDFQRGKFRVRGDVVEVFPASRDEHAFRIEFFGDEIDRIREIESLTGRVLGEVEHLAIFPATHFMTNDEHMEEAISKIQAEMENQVELFEKEGKLIEAQRIRQRTEYDIEMLREMGYTNGVENYSRHMDGRSEGEPPFTLLDFFPEDFLIMIDESHMTMGQIKGMYNGDRSRKEMLVNYGFRLPSALDNRPLRREEFESHVHQIVYVSATPGDYEMEQTDTVVEQIIRPTGLLDPEVEVRPSMGQMDDLLGEINLRTEKGERTFITTLTKRMAEDLTDYLKEMGVKVKYMHSDIKTLERTEIIRDLRLGVFDVLIGINLLREGIDVPEVSLVAILDADKEGFLRNERGLIQTIGRAARNSNGHVIMYADKITDSMQRAMDETARRRRLQMDYNEKHGIVPQTIKKEIRDLIAITKSNDSDKPEKVVDYSSLSKKERQAEIKALQQQMQEAAELLDFELAAQIRDVILELKAID</sequence>
<reference key="1">
    <citation type="journal article" date="2002" name="Mol. Microbiol.">
        <title>Genome sequence of Streptococcus agalactiae, a pathogen causing invasive neonatal disease.</title>
        <authorList>
            <person name="Glaser P."/>
            <person name="Rusniok C."/>
            <person name="Buchrieser C."/>
            <person name="Chevalier F."/>
            <person name="Frangeul L."/>
            <person name="Msadek T."/>
            <person name="Zouine M."/>
            <person name="Couve E."/>
            <person name="Lalioui L."/>
            <person name="Poyart C."/>
            <person name="Trieu-Cuot P."/>
            <person name="Kunst F."/>
        </authorList>
    </citation>
    <scope>NUCLEOTIDE SEQUENCE [LARGE SCALE GENOMIC DNA]</scope>
    <source>
        <strain>NEM316</strain>
    </source>
</reference>
<organism>
    <name type="scientific">Streptococcus agalactiae serotype III (strain NEM316)</name>
    <dbReference type="NCBI Taxonomy" id="211110"/>
    <lineage>
        <taxon>Bacteria</taxon>
        <taxon>Bacillati</taxon>
        <taxon>Bacillota</taxon>
        <taxon>Bacilli</taxon>
        <taxon>Lactobacillales</taxon>
        <taxon>Streptococcaceae</taxon>
        <taxon>Streptococcus</taxon>
    </lineage>
</organism>
<comment type="function">
    <text evidence="1">The UvrABC repair system catalyzes the recognition and processing of DNA lesions. A damage recognition complex composed of 2 UvrA and 2 UvrB subunits scans DNA for abnormalities. Upon binding of the UvrA(2)B(2) complex to a putative damaged site, the DNA wraps around one UvrB monomer. DNA wrap is dependent on ATP binding by UvrB and probably causes local melting of the DNA helix, facilitating insertion of UvrB beta-hairpin between the DNA strands. Then UvrB probes one DNA strand for the presence of a lesion. If a lesion is found the UvrA subunits dissociate and the UvrB-DNA preincision complex is formed. This complex is subsequently bound by UvrC and the second UvrB is released. If no lesion is found, the DNA wraps around the other UvrB subunit that will check the other stand for damage.</text>
</comment>
<comment type="subunit">
    <text evidence="1">Forms a heterotetramer with UvrA during the search for lesions. Interacts with UvrC in an incision complex.</text>
</comment>
<comment type="subcellular location">
    <subcellularLocation>
        <location evidence="1">Cytoplasm</location>
    </subcellularLocation>
</comment>
<comment type="domain">
    <text evidence="1">The beta-hairpin motif is involved in DNA binding.</text>
</comment>
<comment type="similarity">
    <text evidence="1">Belongs to the UvrB family.</text>
</comment>
<dbReference type="EMBL" id="AL766851">
    <property type="protein sequence ID" value="CAD47190.1"/>
    <property type="molecule type" value="Genomic_DNA"/>
</dbReference>
<dbReference type="RefSeq" id="WP_000567072.1">
    <property type="nucleotide sequence ID" value="NC_004368.1"/>
</dbReference>
<dbReference type="SMR" id="Q8E471"/>
<dbReference type="KEGG" id="san:UvrB"/>
<dbReference type="eggNOG" id="COG0556">
    <property type="taxonomic scope" value="Bacteria"/>
</dbReference>
<dbReference type="HOGENOM" id="CLU_009621_2_1_9"/>
<dbReference type="Proteomes" id="UP000000823">
    <property type="component" value="Chromosome"/>
</dbReference>
<dbReference type="GO" id="GO:0005737">
    <property type="term" value="C:cytoplasm"/>
    <property type="evidence" value="ECO:0007669"/>
    <property type="project" value="UniProtKB-SubCell"/>
</dbReference>
<dbReference type="GO" id="GO:0009380">
    <property type="term" value="C:excinuclease repair complex"/>
    <property type="evidence" value="ECO:0007669"/>
    <property type="project" value="InterPro"/>
</dbReference>
<dbReference type="GO" id="GO:0005524">
    <property type="term" value="F:ATP binding"/>
    <property type="evidence" value="ECO:0007669"/>
    <property type="project" value="UniProtKB-UniRule"/>
</dbReference>
<dbReference type="GO" id="GO:0016887">
    <property type="term" value="F:ATP hydrolysis activity"/>
    <property type="evidence" value="ECO:0007669"/>
    <property type="project" value="InterPro"/>
</dbReference>
<dbReference type="GO" id="GO:0003677">
    <property type="term" value="F:DNA binding"/>
    <property type="evidence" value="ECO:0007669"/>
    <property type="project" value="UniProtKB-UniRule"/>
</dbReference>
<dbReference type="GO" id="GO:0009381">
    <property type="term" value="F:excinuclease ABC activity"/>
    <property type="evidence" value="ECO:0007669"/>
    <property type="project" value="UniProtKB-UniRule"/>
</dbReference>
<dbReference type="GO" id="GO:0006289">
    <property type="term" value="P:nucleotide-excision repair"/>
    <property type="evidence" value="ECO:0007669"/>
    <property type="project" value="UniProtKB-UniRule"/>
</dbReference>
<dbReference type="GO" id="GO:0009432">
    <property type="term" value="P:SOS response"/>
    <property type="evidence" value="ECO:0007669"/>
    <property type="project" value="UniProtKB-UniRule"/>
</dbReference>
<dbReference type="CDD" id="cd17916">
    <property type="entry name" value="DEXHc_UvrB"/>
    <property type="match status" value="1"/>
</dbReference>
<dbReference type="CDD" id="cd18790">
    <property type="entry name" value="SF2_C_UvrB"/>
    <property type="match status" value="1"/>
</dbReference>
<dbReference type="Gene3D" id="3.40.50.300">
    <property type="entry name" value="P-loop containing nucleotide triphosphate hydrolases"/>
    <property type="match status" value="3"/>
</dbReference>
<dbReference type="Gene3D" id="4.10.860.10">
    <property type="entry name" value="UVR domain"/>
    <property type="match status" value="1"/>
</dbReference>
<dbReference type="HAMAP" id="MF_00204">
    <property type="entry name" value="UvrB"/>
    <property type="match status" value="1"/>
</dbReference>
<dbReference type="InterPro" id="IPR006935">
    <property type="entry name" value="Helicase/UvrB_N"/>
</dbReference>
<dbReference type="InterPro" id="IPR014001">
    <property type="entry name" value="Helicase_ATP-bd"/>
</dbReference>
<dbReference type="InterPro" id="IPR001650">
    <property type="entry name" value="Helicase_C-like"/>
</dbReference>
<dbReference type="InterPro" id="IPR027417">
    <property type="entry name" value="P-loop_NTPase"/>
</dbReference>
<dbReference type="InterPro" id="IPR001943">
    <property type="entry name" value="UVR_dom"/>
</dbReference>
<dbReference type="InterPro" id="IPR036876">
    <property type="entry name" value="UVR_dom_sf"/>
</dbReference>
<dbReference type="InterPro" id="IPR004807">
    <property type="entry name" value="UvrB"/>
</dbReference>
<dbReference type="InterPro" id="IPR041471">
    <property type="entry name" value="UvrB_inter"/>
</dbReference>
<dbReference type="InterPro" id="IPR024759">
    <property type="entry name" value="UvrB_YAD/RRR_dom"/>
</dbReference>
<dbReference type="NCBIfam" id="NF003673">
    <property type="entry name" value="PRK05298.1"/>
    <property type="match status" value="1"/>
</dbReference>
<dbReference type="NCBIfam" id="TIGR00631">
    <property type="entry name" value="uvrb"/>
    <property type="match status" value="1"/>
</dbReference>
<dbReference type="PANTHER" id="PTHR24029">
    <property type="entry name" value="UVRABC SYSTEM PROTEIN B"/>
    <property type="match status" value="1"/>
</dbReference>
<dbReference type="PANTHER" id="PTHR24029:SF0">
    <property type="entry name" value="UVRABC SYSTEM PROTEIN B"/>
    <property type="match status" value="1"/>
</dbReference>
<dbReference type="Pfam" id="PF00271">
    <property type="entry name" value="Helicase_C"/>
    <property type="match status" value="1"/>
</dbReference>
<dbReference type="Pfam" id="PF04851">
    <property type="entry name" value="ResIII"/>
    <property type="match status" value="1"/>
</dbReference>
<dbReference type="Pfam" id="PF02151">
    <property type="entry name" value="UVR"/>
    <property type="match status" value="1"/>
</dbReference>
<dbReference type="Pfam" id="PF12344">
    <property type="entry name" value="UvrB"/>
    <property type="match status" value="1"/>
</dbReference>
<dbReference type="Pfam" id="PF17757">
    <property type="entry name" value="UvrB_inter"/>
    <property type="match status" value="1"/>
</dbReference>
<dbReference type="SMART" id="SM00487">
    <property type="entry name" value="DEXDc"/>
    <property type="match status" value="1"/>
</dbReference>
<dbReference type="SMART" id="SM00490">
    <property type="entry name" value="HELICc"/>
    <property type="match status" value="1"/>
</dbReference>
<dbReference type="SUPFAM" id="SSF46600">
    <property type="entry name" value="C-terminal UvrC-binding domain of UvrB"/>
    <property type="match status" value="1"/>
</dbReference>
<dbReference type="SUPFAM" id="SSF52540">
    <property type="entry name" value="P-loop containing nucleoside triphosphate hydrolases"/>
    <property type="match status" value="2"/>
</dbReference>
<dbReference type="PROSITE" id="PS51192">
    <property type="entry name" value="HELICASE_ATP_BIND_1"/>
    <property type="match status" value="1"/>
</dbReference>
<dbReference type="PROSITE" id="PS51194">
    <property type="entry name" value="HELICASE_CTER"/>
    <property type="match status" value="1"/>
</dbReference>
<dbReference type="PROSITE" id="PS50151">
    <property type="entry name" value="UVR"/>
    <property type="match status" value="1"/>
</dbReference>
<protein>
    <recommendedName>
        <fullName evidence="1">UvrABC system protein B</fullName>
        <shortName evidence="1">Protein UvrB</shortName>
    </recommendedName>
    <alternativeName>
        <fullName evidence="1">Excinuclease ABC subunit B</fullName>
    </alternativeName>
</protein>
<feature type="chain" id="PRO_0000227366" description="UvrABC system protein B">
    <location>
        <begin position="1"/>
        <end position="663"/>
    </location>
</feature>
<feature type="domain" description="Helicase ATP-binding" evidence="1">
    <location>
        <begin position="31"/>
        <end position="418"/>
    </location>
</feature>
<feature type="domain" description="Helicase C-terminal" evidence="1">
    <location>
        <begin position="435"/>
        <end position="601"/>
    </location>
</feature>
<feature type="domain" description="UVR" evidence="1">
    <location>
        <begin position="627"/>
        <end position="662"/>
    </location>
</feature>
<feature type="short sequence motif" description="Beta-hairpin">
    <location>
        <begin position="97"/>
        <end position="120"/>
    </location>
</feature>
<feature type="binding site" evidence="1">
    <location>
        <begin position="44"/>
        <end position="51"/>
    </location>
    <ligand>
        <name>ATP</name>
        <dbReference type="ChEBI" id="CHEBI:30616"/>
    </ligand>
</feature>
<accession>Q8E471</accession>
<evidence type="ECO:0000255" key="1">
    <source>
        <dbReference type="HAMAP-Rule" id="MF_00204"/>
    </source>
</evidence>
<gene>
    <name evidence="1" type="primary">uvrB</name>
    <name type="ordered locus">gbs1531</name>
</gene>
<proteinExistence type="inferred from homology"/>
<name>UVRB_STRA3</name>